<sequence>MSSDTSASRPPQPDTRTASKSESENPAIPSPHPKSNAPLTNRDWWPNQIDVSRLHPHVAEANPLGEDFDYAEEFAKLDVEALKADVISVMTTSQDWWPADYGHYGGLFIRMSWHAAGTYRIHDGRGGGGQGMQRFAPLNSWPDNVSLDKARRLLWPVKKKYGNKISWADLIIFAGNCALESMGFKTFGFAFGREDVWEPEEILWGEEDEWLGTDKRYPGTGERELAQPYGATTMGLIYVNPEGPEGKPDPIAAAIDIRETFGRMAMNDEETAALIVGGHSFGKTHGAGDADLVGPEPEAAPIEQQGLGWKSSHGTGVGKDAITSGLEVVWTPTPTKWDNTFLETLYGYEWELTKSPAGAWQFTAKDGAGAGTIPDPFGGPGRAPTMLVTDISLRESPIYRDITRRWLDHPEELADAFAKAWYKLLHRDMGLVSRFLGPWVPEPQLWQDPVPPVDHPLVDDNDVAALKDKVLASGLSVPQLVKTAWSAAGSYRNTDKRGGANGGRLRLQPQRNWEANEPSELDKVLPVLEKIQQDFNASASGGKKISLADLIVLAGSAAVEKAAKDAGYEISVHFAPGRTDASQESTDVDSFAVLEPRADGFRNFARPGEKAPLEQLLLERAYLLGVTGPEMTVLVGGLRALGANHGGSKHGVFTDRPGALTNDFFVNLLDMGTEWKASETAENVYEGHDRATGALKWTATANDLVFGSNSVLRALAEVYAQDDNQGKFVEDFVAAWVKVMNNDRFDLK</sequence>
<organism>
    <name type="scientific">Mycolicibacterium paratuberculosis (strain ATCC BAA-968 / K-10)</name>
    <name type="common">Mycobacterium paratuberculosis</name>
    <dbReference type="NCBI Taxonomy" id="262316"/>
    <lineage>
        <taxon>Bacteria</taxon>
        <taxon>Bacillati</taxon>
        <taxon>Actinomycetota</taxon>
        <taxon>Actinomycetes</taxon>
        <taxon>Mycobacteriales</taxon>
        <taxon>Mycobacteriaceae</taxon>
        <taxon>Mycobacterium</taxon>
        <taxon>Mycobacterium avium complex (MAC)</taxon>
    </lineage>
</organism>
<evidence type="ECO:0000255" key="1">
    <source>
        <dbReference type="HAMAP-Rule" id="MF_01961"/>
    </source>
</evidence>
<evidence type="ECO:0000256" key="2">
    <source>
        <dbReference type="SAM" id="MobiDB-lite"/>
    </source>
</evidence>
<keyword id="KW-0349">Heme</keyword>
<keyword id="KW-0376">Hydrogen peroxide</keyword>
<keyword id="KW-0408">Iron</keyword>
<keyword id="KW-0479">Metal-binding</keyword>
<keyword id="KW-0560">Oxidoreductase</keyword>
<keyword id="KW-0575">Peroxidase</keyword>
<keyword id="KW-1185">Reference proteome</keyword>
<protein>
    <recommendedName>
        <fullName evidence="1">Catalase-peroxidase</fullName>
        <shortName evidence="1">CP</shortName>
        <ecNumber evidence="1">1.11.1.21</ecNumber>
    </recommendedName>
    <alternativeName>
        <fullName evidence="1">Peroxidase/catalase</fullName>
    </alternativeName>
</protein>
<name>KATG_MYCPA</name>
<dbReference type="EC" id="1.11.1.21" evidence="1"/>
<dbReference type="EMBL" id="AE016958">
    <property type="protein sequence ID" value="AAS03985.1"/>
    <property type="molecule type" value="Genomic_DNA"/>
</dbReference>
<dbReference type="RefSeq" id="WP_003877970.1">
    <property type="nucleotide sequence ID" value="NZ_CP106873.1"/>
</dbReference>
<dbReference type="SMR" id="Q73ZD5"/>
<dbReference type="STRING" id="262316.MAP_1668c"/>
<dbReference type="PeroxiBase" id="2712">
    <property type="entry name" value="MavpCP01"/>
</dbReference>
<dbReference type="KEGG" id="mpa:MAP_1668c"/>
<dbReference type="PATRIC" id="fig|262316.17.peg.1762"/>
<dbReference type="eggNOG" id="COG0376">
    <property type="taxonomic scope" value="Bacteria"/>
</dbReference>
<dbReference type="HOGENOM" id="CLU_025424_2_0_11"/>
<dbReference type="Proteomes" id="UP000000580">
    <property type="component" value="Chromosome"/>
</dbReference>
<dbReference type="GO" id="GO:0005829">
    <property type="term" value="C:cytosol"/>
    <property type="evidence" value="ECO:0007669"/>
    <property type="project" value="TreeGrafter"/>
</dbReference>
<dbReference type="GO" id="GO:0004096">
    <property type="term" value="F:catalase activity"/>
    <property type="evidence" value="ECO:0007669"/>
    <property type="project" value="UniProtKB-UniRule"/>
</dbReference>
<dbReference type="GO" id="GO:0020037">
    <property type="term" value="F:heme binding"/>
    <property type="evidence" value="ECO:0007669"/>
    <property type="project" value="InterPro"/>
</dbReference>
<dbReference type="GO" id="GO:0046872">
    <property type="term" value="F:metal ion binding"/>
    <property type="evidence" value="ECO:0007669"/>
    <property type="project" value="UniProtKB-KW"/>
</dbReference>
<dbReference type="GO" id="GO:0070301">
    <property type="term" value="P:cellular response to hydrogen peroxide"/>
    <property type="evidence" value="ECO:0007669"/>
    <property type="project" value="TreeGrafter"/>
</dbReference>
<dbReference type="GO" id="GO:0042744">
    <property type="term" value="P:hydrogen peroxide catabolic process"/>
    <property type="evidence" value="ECO:0007669"/>
    <property type="project" value="UniProtKB-KW"/>
</dbReference>
<dbReference type="CDD" id="cd00649">
    <property type="entry name" value="catalase_peroxidase_1"/>
    <property type="match status" value="1"/>
</dbReference>
<dbReference type="CDD" id="cd08200">
    <property type="entry name" value="catalase_peroxidase_2"/>
    <property type="match status" value="1"/>
</dbReference>
<dbReference type="FunFam" id="1.10.420.10:FF:000004">
    <property type="entry name" value="Catalase-peroxidase"/>
    <property type="match status" value="1"/>
</dbReference>
<dbReference type="FunFam" id="1.10.520.10:FF:000002">
    <property type="entry name" value="Catalase-peroxidase"/>
    <property type="match status" value="1"/>
</dbReference>
<dbReference type="Gene3D" id="1.10.520.10">
    <property type="match status" value="2"/>
</dbReference>
<dbReference type="Gene3D" id="1.10.420.10">
    <property type="entry name" value="Peroxidase, domain 2"/>
    <property type="match status" value="2"/>
</dbReference>
<dbReference type="HAMAP" id="MF_01961">
    <property type="entry name" value="Catal_peroxid"/>
    <property type="match status" value="1"/>
</dbReference>
<dbReference type="InterPro" id="IPR000763">
    <property type="entry name" value="Catalase_peroxidase"/>
</dbReference>
<dbReference type="InterPro" id="IPR002016">
    <property type="entry name" value="Haem_peroxidase"/>
</dbReference>
<dbReference type="InterPro" id="IPR010255">
    <property type="entry name" value="Haem_peroxidase_sf"/>
</dbReference>
<dbReference type="InterPro" id="IPR019794">
    <property type="entry name" value="Peroxidases_AS"/>
</dbReference>
<dbReference type="InterPro" id="IPR019793">
    <property type="entry name" value="Peroxidases_heam-ligand_BS"/>
</dbReference>
<dbReference type="NCBIfam" id="TIGR00198">
    <property type="entry name" value="cat_per_HPI"/>
    <property type="match status" value="1"/>
</dbReference>
<dbReference type="NCBIfam" id="NF011635">
    <property type="entry name" value="PRK15061.1"/>
    <property type="match status" value="1"/>
</dbReference>
<dbReference type="PANTHER" id="PTHR30555:SF0">
    <property type="entry name" value="CATALASE-PEROXIDASE"/>
    <property type="match status" value="1"/>
</dbReference>
<dbReference type="PANTHER" id="PTHR30555">
    <property type="entry name" value="HYDROPEROXIDASE I, BIFUNCTIONAL CATALASE-PEROXIDASE"/>
    <property type="match status" value="1"/>
</dbReference>
<dbReference type="Pfam" id="PF00141">
    <property type="entry name" value="peroxidase"/>
    <property type="match status" value="2"/>
</dbReference>
<dbReference type="PRINTS" id="PR00460">
    <property type="entry name" value="BPEROXIDASE"/>
</dbReference>
<dbReference type="PRINTS" id="PR00458">
    <property type="entry name" value="PEROXIDASE"/>
</dbReference>
<dbReference type="SUPFAM" id="SSF48113">
    <property type="entry name" value="Heme-dependent peroxidases"/>
    <property type="match status" value="2"/>
</dbReference>
<dbReference type="PROSITE" id="PS00435">
    <property type="entry name" value="PEROXIDASE_1"/>
    <property type="match status" value="1"/>
</dbReference>
<dbReference type="PROSITE" id="PS00436">
    <property type="entry name" value="PEROXIDASE_2"/>
    <property type="match status" value="1"/>
</dbReference>
<dbReference type="PROSITE" id="PS50873">
    <property type="entry name" value="PEROXIDASE_4"/>
    <property type="match status" value="1"/>
</dbReference>
<reference key="1">
    <citation type="journal article" date="2005" name="Proc. Natl. Acad. Sci. U.S.A.">
        <title>The complete genome sequence of Mycobacterium avium subspecies paratuberculosis.</title>
        <authorList>
            <person name="Li L."/>
            <person name="Bannantine J.P."/>
            <person name="Zhang Q."/>
            <person name="Amonsin A."/>
            <person name="May B.J."/>
            <person name="Alt D."/>
            <person name="Banerji N."/>
            <person name="Kanjilal S."/>
            <person name="Kapur V."/>
        </authorList>
    </citation>
    <scope>NUCLEOTIDE SEQUENCE [LARGE SCALE GENOMIC DNA]</scope>
    <source>
        <strain>ATCC BAA-968 / K-10</strain>
    </source>
</reference>
<comment type="function">
    <text evidence="1">Bifunctional enzyme with both catalase and broad-spectrum peroxidase activity.</text>
</comment>
<comment type="catalytic activity">
    <reaction evidence="1">
        <text>H2O2 + AH2 = A + 2 H2O</text>
        <dbReference type="Rhea" id="RHEA:30275"/>
        <dbReference type="ChEBI" id="CHEBI:13193"/>
        <dbReference type="ChEBI" id="CHEBI:15377"/>
        <dbReference type="ChEBI" id="CHEBI:16240"/>
        <dbReference type="ChEBI" id="CHEBI:17499"/>
        <dbReference type="EC" id="1.11.1.21"/>
    </reaction>
</comment>
<comment type="catalytic activity">
    <reaction evidence="1">
        <text>2 H2O2 = O2 + 2 H2O</text>
        <dbReference type="Rhea" id="RHEA:20309"/>
        <dbReference type="ChEBI" id="CHEBI:15377"/>
        <dbReference type="ChEBI" id="CHEBI:15379"/>
        <dbReference type="ChEBI" id="CHEBI:16240"/>
        <dbReference type="EC" id="1.11.1.21"/>
    </reaction>
</comment>
<comment type="cofactor">
    <cofactor evidence="1">
        <name>heme b</name>
        <dbReference type="ChEBI" id="CHEBI:60344"/>
    </cofactor>
    <text evidence="1">Binds 1 heme b (iron(II)-protoporphyrin IX) group per dimer.</text>
</comment>
<comment type="subunit">
    <text evidence="1">Homodimer or homotetramer.</text>
</comment>
<comment type="PTM">
    <text evidence="1">Formation of the three residue Trp-Tyr-Met cross-link is important for the catalase, but not the peroxidase activity of the enzyme.</text>
</comment>
<comment type="similarity">
    <text evidence="1">Belongs to the peroxidase family. Peroxidase/catalase subfamily.</text>
</comment>
<feature type="chain" id="PRO_0000354839" description="Catalase-peroxidase">
    <location>
        <begin position="1"/>
        <end position="748"/>
    </location>
</feature>
<feature type="region of interest" description="Disordered" evidence="2">
    <location>
        <begin position="1"/>
        <end position="43"/>
    </location>
</feature>
<feature type="compositionally biased region" description="Polar residues" evidence="2">
    <location>
        <begin position="1"/>
        <end position="16"/>
    </location>
</feature>
<feature type="active site" description="Proton acceptor" evidence="1">
    <location>
        <position position="114"/>
    </location>
</feature>
<feature type="binding site" description="axial binding residue" evidence="1">
    <location>
        <position position="279"/>
    </location>
    <ligand>
        <name>heme b</name>
        <dbReference type="ChEBI" id="CHEBI:60344"/>
    </ligand>
    <ligandPart>
        <name>Fe</name>
        <dbReference type="ChEBI" id="CHEBI:18248"/>
    </ligandPart>
</feature>
<feature type="site" description="Transition state stabilizer" evidence="1">
    <location>
        <position position="110"/>
    </location>
</feature>
<feature type="cross-link" description="Tryptophyl-tyrosyl-methioninium (Trp-Tyr) (with M-264)" evidence="1">
    <location>
        <begin position="113"/>
        <end position="238"/>
    </location>
</feature>
<feature type="cross-link" description="Tryptophyl-tyrosyl-methioninium (Tyr-Met) (with W-113)" evidence="1">
    <location>
        <begin position="238"/>
        <end position="264"/>
    </location>
</feature>
<proteinExistence type="inferred from homology"/>
<gene>
    <name evidence="1" type="primary">katG</name>
    <name type="ordered locus">MAP_1668c</name>
</gene>
<accession>Q73ZD5</accession>